<organism>
    <name type="scientific">Citrobacter koseri (strain ATCC BAA-895 / CDC 4225-83 / SGSC4696)</name>
    <dbReference type="NCBI Taxonomy" id="290338"/>
    <lineage>
        <taxon>Bacteria</taxon>
        <taxon>Pseudomonadati</taxon>
        <taxon>Pseudomonadota</taxon>
        <taxon>Gammaproteobacteria</taxon>
        <taxon>Enterobacterales</taxon>
        <taxon>Enterobacteriaceae</taxon>
        <taxon>Citrobacter</taxon>
    </lineage>
</organism>
<keyword id="KW-0326">Glycosidase</keyword>
<keyword id="KW-0378">Hydrolase</keyword>
<keyword id="KW-0460">Magnesium</keyword>
<keyword id="KW-0479">Metal-binding</keyword>
<keyword id="KW-1185">Reference proteome</keyword>
<keyword id="KW-0915">Sodium</keyword>
<protein>
    <recommendedName>
        <fullName evidence="1">Beta-galactosidase</fullName>
        <shortName evidence="1">Beta-gal</shortName>
        <ecNumber evidence="1">3.2.1.23</ecNumber>
    </recommendedName>
    <alternativeName>
        <fullName evidence="1">Lactase</fullName>
    </alternativeName>
</protein>
<name>BGAL_CITK8</name>
<proteinExistence type="inferred from homology"/>
<evidence type="ECO:0000255" key="1">
    <source>
        <dbReference type="HAMAP-Rule" id="MF_01687"/>
    </source>
</evidence>
<sequence length="1025" mass="116279">MPQNADSLAVVLKCRDWENPGVTQLNRLEAHPPFCSWRNADDARVNRDSAQKRSLNGEWTFAWFSAPEAVPESWRTSDLQQADSVRVPSNWQMDGYDAPIYTNVTYPIPVNPPFVPADNPTGCYSLTFSIDADWLQAGQTRIIFDGVNSAFHLWCNSRWVGYGQDSRLPSEFDLTHFLLKGENRLAVMVLRWSDGSYLEDQDMWRMSGIFRDVSLLHKPATQIRDLRINTRFNDDFSRAVLEAEVRTTGERRDDLRVTVQLWDSETFVGEKTAPLGSEIIDERGAYPDRTTLRLNVEHPALWSAETPHLYRAVVQLHAADGTLIEAEACDVGFRQVSIENGLLLLNGKPLLIRGANRHEHHPENGQVMDKETMIKDILLMKQNNFNAVRCSHYPNHPLWYTLCDRYGLYVVDEANIETHGMVPMNRLSDDPVWLPAMSQRVTRMVQRDRNHPSIIIWSLGNESGHGANHDALYRWIKSEDPSRPVQYEGGGANTAATDIICPMYARVDQDQPFPAVPKWSIKKWLSMPGEQRPLILCEYAHAMGNSLGGYAKYWQAFRQYPRLQGGFVWDWVDQSLIKYDDDGRPWSAYGGDFGDAPNDRQFCMNGLVFADRTPHPSLYEAKHAQQFFQFALLPGAECQIEVTSEYLFRHSDNEVLHWSLALDGNPLTAGVVTLDIPPQGRQIIALPALPEAETAGQLWLTVRVEQPQATAWSQAGHISAWQQWKLGEKLATQWPQHAGNAPQLTSSGTAFRIVAGEKRWEFSRQQGVLTQFWIGEEAQLLTPLVDQFTRAPLDNDIGVSEATRIDPNAWVERWKAAGHYQAKAVLLQCDADTLASAVLITTAHAWQYQGETLFISRKTYRIDGNGEMQITVDVDVASGTPHPARIGLSCQLAQVAERVNWLGLGPHENYPDRLSAACFERWDLPLEEMYTPYVFPSENGLRCGTRELLYGAHQWRGDFQFNISRYGQKQLMETSHRHLLQPEAGTWLNIDGFHMGVGGDDSWSPSVSAEYQLSAGRYHYQISWR</sequence>
<reference key="1">
    <citation type="submission" date="2007-08" db="EMBL/GenBank/DDBJ databases">
        <authorList>
            <consortium name="The Citrobacter koseri Genome Sequencing Project"/>
            <person name="McClelland M."/>
            <person name="Sanderson E.K."/>
            <person name="Porwollik S."/>
            <person name="Spieth J."/>
            <person name="Clifton W.S."/>
            <person name="Latreille P."/>
            <person name="Courtney L."/>
            <person name="Wang C."/>
            <person name="Pepin K."/>
            <person name="Bhonagiri V."/>
            <person name="Nash W."/>
            <person name="Johnson M."/>
            <person name="Thiruvilangam P."/>
            <person name="Wilson R."/>
        </authorList>
    </citation>
    <scope>NUCLEOTIDE SEQUENCE [LARGE SCALE GENOMIC DNA]</scope>
    <source>
        <strain>ATCC BAA-895 / CDC 4225-83 / SGSC4696</strain>
    </source>
</reference>
<feature type="chain" id="PRO_0000366981" description="Beta-galactosidase">
    <location>
        <begin position="1"/>
        <end position="1025"/>
    </location>
</feature>
<feature type="active site" description="Proton donor" evidence="1">
    <location>
        <position position="462"/>
    </location>
</feature>
<feature type="active site" description="Nucleophile" evidence="1">
    <location>
        <position position="538"/>
    </location>
</feature>
<feature type="binding site" evidence="1">
    <location>
        <position position="103"/>
    </location>
    <ligand>
        <name>substrate</name>
    </ligand>
</feature>
<feature type="binding site" evidence="1">
    <location>
        <position position="202"/>
    </location>
    <ligand>
        <name>Na(+)</name>
        <dbReference type="ChEBI" id="CHEBI:29101"/>
    </ligand>
</feature>
<feature type="binding site" evidence="1">
    <location>
        <position position="202"/>
    </location>
    <ligand>
        <name>substrate</name>
    </ligand>
</feature>
<feature type="binding site" evidence="1">
    <location>
        <position position="417"/>
    </location>
    <ligand>
        <name>Mg(2+)</name>
        <dbReference type="ChEBI" id="CHEBI:18420"/>
        <label>1</label>
    </ligand>
</feature>
<feature type="binding site" evidence="1">
    <location>
        <position position="419"/>
    </location>
    <ligand>
        <name>Mg(2+)</name>
        <dbReference type="ChEBI" id="CHEBI:18420"/>
        <label>1</label>
    </ligand>
</feature>
<feature type="binding site" evidence="1">
    <location>
        <position position="462"/>
    </location>
    <ligand>
        <name>Mg(2+)</name>
        <dbReference type="ChEBI" id="CHEBI:18420"/>
        <label>1</label>
    </ligand>
</feature>
<feature type="binding site" evidence="1">
    <location>
        <position position="462"/>
    </location>
    <ligand>
        <name>substrate</name>
    </ligand>
</feature>
<feature type="binding site" evidence="1">
    <location>
        <begin position="538"/>
        <end position="541"/>
    </location>
    <ligand>
        <name>substrate</name>
    </ligand>
</feature>
<feature type="binding site" evidence="1">
    <location>
        <position position="598"/>
    </location>
    <ligand>
        <name>Mg(2+)</name>
        <dbReference type="ChEBI" id="CHEBI:18420"/>
        <label>2</label>
    </ligand>
</feature>
<feature type="binding site" evidence="1">
    <location>
        <position position="602"/>
    </location>
    <ligand>
        <name>Na(+)</name>
        <dbReference type="ChEBI" id="CHEBI:29101"/>
    </ligand>
</feature>
<feature type="binding site" evidence="1">
    <location>
        <position position="605"/>
    </location>
    <ligand>
        <name>Na(+)</name>
        <dbReference type="ChEBI" id="CHEBI:29101"/>
    </ligand>
</feature>
<feature type="binding site" evidence="1">
    <location>
        <position position="605"/>
    </location>
    <ligand>
        <name>substrate</name>
    </ligand>
</feature>
<feature type="binding site" evidence="1">
    <location>
        <position position="1003"/>
    </location>
    <ligand>
        <name>substrate</name>
    </ligand>
</feature>
<feature type="site" description="Transition state stabilizer" evidence="1">
    <location>
        <position position="358"/>
    </location>
</feature>
<feature type="site" description="Transition state stabilizer" evidence="1">
    <location>
        <position position="392"/>
    </location>
</feature>
<accession>A8AKB8</accession>
<gene>
    <name evidence="1" type="primary">lacZ</name>
    <name type="ordered locus">CKO_02825</name>
</gene>
<comment type="catalytic activity">
    <reaction evidence="1">
        <text>Hydrolysis of terminal non-reducing beta-D-galactose residues in beta-D-galactosides.</text>
        <dbReference type="EC" id="3.2.1.23"/>
    </reaction>
</comment>
<comment type="cofactor">
    <cofactor evidence="1">
        <name>Mg(2+)</name>
        <dbReference type="ChEBI" id="CHEBI:18420"/>
    </cofactor>
    <text evidence="1">Binds 2 magnesium ions per monomer.</text>
</comment>
<comment type="cofactor">
    <cofactor evidence="1">
        <name>Na(+)</name>
        <dbReference type="ChEBI" id="CHEBI:29101"/>
    </cofactor>
    <text evidence="1">Binds 1 sodium ion per monomer.</text>
</comment>
<comment type="subunit">
    <text evidence="1">Homotetramer.</text>
</comment>
<comment type="similarity">
    <text evidence="1">Belongs to the glycosyl hydrolase 2 family.</text>
</comment>
<dbReference type="EC" id="3.2.1.23" evidence="1"/>
<dbReference type="EMBL" id="CP000822">
    <property type="protein sequence ID" value="ABV13931.1"/>
    <property type="molecule type" value="Genomic_DNA"/>
</dbReference>
<dbReference type="RefSeq" id="WP_012133644.1">
    <property type="nucleotide sequence ID" value="NC_009792.1"/>
</dbReference>
<dbReference type="SMR" id="A8AKB8"/>
<dbReference type="STRING" id="290338.CKO_02825"/>
<dbReference type="CAZy" id="GH2">
    <property type="family name" value="Glycoside Hydrolase Family 2"/>
</dbReference>
<dbReference type="GeneID" id="45136662"/>
<dbReference type="KEGG" id="cko:CKO_02825"/>
<dbReference type="HOGENOM" id="CLU_002346_0_2_6"/>
<dbReference type="OrthoDB" id="9758603at2"/>
<dbReference type="Proteomes" id="UP000008148">
    <property type="component" value="Chromosome"/>
</dbReference>
<dbReference type="GO" id="GO:0009341">
    <property type="term" value="C:beta-galactosidase complex"/>
    <property type="evidence" value="ECO:0007669"/>
    <property type="project" value="InterPro"/>
</dbReference>
<dbReference type="GO" id="GO:0004565">
    <property type="term" value="F:beta-galactosidase activity"/>
    <property type="evidence" value="ECO:0007669"/>
    <property type="project" value="UniProtKB-EC"/>
</dbReference>
<dbReference type="GO" id="GO:0030246">
    <property type="term" value="F:carbohydrate binding"/>
    <property type="evidence" value="ECO:0007669"/>
    <property type="project" value="InterPro"/>
</dbReference>
<dbReference type="GO" id="GO:0000287">
    <property type="term" value="F:magnesium ion binding"/>
    <property type="evidence" value="ECO:0007669"/>
    <property type="project" value="UniProtKB-UniRule"/>
</dbReference>
<dbReference type="GO" id="GO:0005990">
    <property type="term" value="P:lactose catabolic process"/>
    <property type="evidence" value="ECO:0007669"/>
    <property type="project" value="TreeGrafter"/>
</dbReference>
<dbReference type="FunFam" id="2.60.120.260:FF:000058">
    <property type="entry name" value="Beta-galactosidase"/>
    <property type="match status" value="1"/>
</dbReference>
<dbReference type="FunFam" id="2.60.40.10:FF:000680">
    <property type="entry name" value="Beta-galactosidase"/>
    <property type="match status" value="1"/>
</dbReference>
<dbReference type="FunFam" id="3.20.20.80:FF:000018">
    <property type="entry name" value="Beta-galactosidase"/>
    <property type="match status" value="1"/>
</dbReference>
<dbReference type="Gene3D" id="2.70.98.10">
    <property type="match status" value="1"/>
</dbReference>
<dbReference type="Gene3D" id="2.60.120.260">
    <property type="entry name" value="Galactose-binding domain-like"/>
    <property type="match status" value="1"/>
</dbReference>
<dbReference type="Gene3D" id="3.20.20.80">
    <property type="entry name" value="Glycosidases"/>
    <property type="match status" value="1"/>
</dbReference>
<dbReference type="Gene3D" id="2.60.40.10">
    <property type="entry name" value="Immunoglobulins"/>
    <property type="match status" value="2"/>
</dbReference>
<dbReference type="HAMAP" id="MF_01687">
    <property type="entry name" value="Beta_gal"/>
    <property type="match status" value="1"/>
</dbReference>
<dbReference type="InterPro" id="IPR004199">
    <property type="entry name" value="B-gal_small/dom_5"/>
</dbReference>
<dbReference type="InterPro" id="IPR050347">
    <property type="entry name" value="Bact_Beta-galactosidase"/>
</dbReference>
<dbReference type="InterPro" id="IPR036156">
    <property type="entry name" value="Beta-gal/glucu_dom_sf"/>
</dbReference>
<dbReference type="InterPro" id="IPR011013">
    <property type="entry name" value="Gal_mutarotase_sf_dom"/>
</dbReference>
<dbReference type="InterPro" id="IPR008979">
    <property type="entry name" value="Galactose-bd-like_sf"/>
</dbReference>
<dbReference type="InterPro" id="IPR014718">
    <property type="entry name" value="GH-type_carb-bd"/>
</dbReference>
<dbReference type="InterPro" id="IPR006101">
    <property type="entry name" value="Glyco_hydro_2"/>
</dbReference>
<dbReference type="InterPro" id="IPR023232">
    <property type="entry name" value="Glyco_hydro_2_AS"/>
</dbReference>
<dbReference type="InterPro" id="IPR023933">
    <property type="entry name" value="Glyco_hydro_2_beta_Galsidase"/>
</dbReference>
<dbReference type="InterPro" id="IPR006103">
    <property type="entry name" value="Glyco_hydro_2_cat"/>
</dbReference>
<dbReference type="InterPro" id="IPR023230">
    <property type="entry name" value="Glyco_hydro_2_CS"/>
</dbReference>
<dbReference type="InterPro" id="IPR006102">
    <property type="entry name" value="Glyco_hydro_2_Ig-like"/>
</dbReference>
<dbReference type="InterPro" id="IPR006104">
    <property type="entry name" value="Glyco_hydro_2_N"/>
</dbReference>
<dbReference type="InterPro" id="IPR017853">
    <property type="entry name" value="Glycoside_hydrolase_SF"/>
</dbReference>
<dbReference type="InterPro" id="IPR013783">
    <property type="entry name" value="Ig-like_fold"/>
</dbReference>
<dbReference type="InterPro" id="IPR032312">
    <property type="entry name" value="LacZ_4"/>
</dbReference>
<dbReference type="NCBIfam" id="NF007074">
    <property type="entry name" value="PRK09525.1"/>
    <property type="match status" value="1"/>
</dbReference>
<dbReference type="PANTHER" id="PTHR46323">
    <property type="entry name" value="BETA-GALACTOSIDASE"/>
    <property type="match status" value="1"/>
</dbReference>
<dbReference type="PANTHER" id="PTHR46323:SF2">
    <property type="entry name" value="BETA-GALACTOSIDASE"/>
    <property type="match status" value="1"/>
</dbReference>
<dbReference type="Pfam" id="PF02929">
    <property type="entry name" value="Bgal_small_N"/>
    <property type="match status" value="1"/>
</dbReference>
<dbReference type="Pfam" id="PF00703">
    <property type="entry name" value="Glyco_hydro_2"/>
    <property type="match status" value="1"/>
</dbReference>
<dbReference type="Pfam" id="PF02836">
    <property type="entry name" value="Glyco_hydro_2_C"/>
    <property type="match status" value="1"/>
</dbReference>
<dbReference type="Pfam" id="PF02837">
    <property type="entry name" value="Glyco_hydro_2_N"/>
    <property type="match status" value="1"/>
</dbReference>
<dbReference type="Pfam" id="PF16353">
    <property type="entry name" value="LacZ_4"/>
    <property type="match status" value="1"/>
</dbReference>
<dbReference type="PRINTS" id="PR00132">
    <property type="entry name" value="GLHYDRLASE2"/>
</dbReference>
<dbReference type="SMART" id="SM01038">
    <property type="entry name" value="Bgal_small_N"/>
    <property type="match status" value="1"/>
</dbReference>
<dbReference type="SUPFAM" id="SSF51445">
    <property type="entry name" value="(Trans)glycosidases"/>
    <property type="match status" value="1"/>
</dbReference>
<dbReference type="SUPFAM" id="SSF49303">
    <property type="entry name" value="beta-Galactosidase/glucuronidase domain"/>
    <property type="match status" value="2"/>
</dbReference>
<dbReference type="SUPFAM" id="SSF74650">
    <property type="entry name" value="Galactose mutarotase-like"/>
    <property type="match status" value="1"/>
</dbReference>
<dbReference type="SUPFAM" id="SSF49785">
    <property type="entry name" value="Galactose-binding domain-like"/>
    <property type="match status" value="1"/>
</dbReference>
<dbReference type="PROSITE" id="PS00719">
    <property type="entry name" value="GLYCOSYL_HYDROL_F2_1"/>
    <property type="match status" value="1"/>
</dbReference>
<dbReference type="PROSITE" id="PS00608">
    <property type="entry name" value="GLYCOSYL_HYDROL_F2_2"/>
    <property type="match status" value="1"/>
</dbReference>